<accession>B0K969</accession>
<proteinExistence type="evidence at protein level"/>
<dbReference type="EC" id="2.4.2.7" evidence="1"/>
<dbReference type="EMBL" id="CP000924">
    <property type="protein sequence ID" value="ABY94682.1"/>
    <property type="molecule type" value="Genomic_DNA"/>
</dbReference>
<dbReference type="RefSeq" id="WP_003869770.1">
    <property type="nucleotide sequence ID" value="NC_010321.1"/>
</dbReference>
<dbReference type="PDB" id="4LZA">
    <property type="method" value="X-ray"/>
    <property type="resolution" value="1.84 A"/>
    <property type="chains" value="A/B=1-173"/>
</dbReference>
<dbReference type="PDBsum" id="4LZA"/>
<dbReference type="SMR" id="B0K969"/>
<dbReference type="STRING" id="340099.Teth39_1027"/>
<dbReference type="KEGG" id="tpd:Teth39_1027"/>
<dbReference type="eggNOG" id="COG0503">
    <property type="taxonomic scope" value="Bacteria"/>
</dbReference>
<dbReference type="HOGENOM" id="CLU_063339_3_0_9"/>
<dbReference type="UniPathway" id="UPA00588">
    <property type="reaction ID" value="UER00646"/>
</dbReference>
<dbReference type="EvolutionaryTrace" id="B0K969"/>
<dbReference type="Proteomes" id="UP000002156">
    <property type="component" value="Chromosome"/>
</dbReference>
<dbReference type="GO" id="GO:0005737">
    <property type="term" value="C:cytoplasm"/>
    <property type="evidence" value="ECO:0007669"/>
    <property type="project" value="UniProtKB-SubCell"/>
</dbReference>
<dbReference type="GO" id="GO:0002055">
    <property type="term" value="F:adenine binding"/>
    <property type="evidence" value="ECO:0007669"/>
    <property type="project" value="TreeGrafter"/>
</dbReference>
<dbReference type="GO" id="GO:0003999">
    <property type="term" value="F:adenine phosphoribosyltransferase activity"/>
    <property type="evidence" value="ECO:0007669"/>
    <property type="project" value="UniProtKB-UniRule"/>
</dbReference>
<dbReference type="GO" id="GO:0016208">
    <property type="term" value="F:AMP binding"/>
    <property type="evidence" value="ECO:0007669"/>
    <property type="project" value="TreeGrafter"/>
</dbReference>
<dbReference type="GO" id="GO:0006168">
    <property type="term" value="P:adenine salvage"/>
    <property type="evidence" value="ECO:0007669"/>
    <property type="project" value="InterPro"/>
</dbReference>
<dbReference type="GO" id="GO:0044209">
    <property type="term" value="P:AMP salvage"/>
    <property type="evidence" value="ECO:0007669"/>
    <property type="project" value="UniProtKB-UniRule"/>
</dbReference>
<dbReference type="GO" id="GO:0006166">
    <property type="term" value="P:purine ribonucleoside salvage"/>
    <property type="evidence" value="ECO:0007669"/>
    <property type="project" value="UniProtKB-KW"/>
</dbReference>
<dbReference type="CDD" id="cd06223">
    <property type="entry name" value="PRTases_typeI"/>
    <property type="match status" value="1"/>
</dbReference>
<dbReference type="FunFam" id="3.40.50.2020:FF:000004">
    <property type="entry name" value="Adenine phosphoribosyltransferase"/>
    <property type="match status" value="1"/>
</dbReference>
<dbReference type="Gene3D" id="3.40.50.2020">
    <property type="match status" value="1"/>
</dbReference>
<dbReference type="HAMAP" id="MF_00004">
    <property type="entry name" value="Aden_phosphoribosyltr"/>
    <property type="match status" value="1"/>
</dbReference>
<dbReference type="InterPro" id="IPR005764">
    <property type="entry name" value="Ade_phspho_trans"/>
</dbReference>
<dbReference type="InterPro" id="IPR000836">
    <property type="entry name" value="PRibTrfase_dom"/>
</dbReference>
<dbReference type="InterPro" id="IPR029057">
    <property type="entry name" value="PRTase-like"/>
</dbReference>
<dbReference type="InterPro" id="IPR050054">
    <property type="entry name" value="UPRTase/APRTase"/>
</dbReference>
<dbReference type="NCBIfam" id="TIGR01090">
    <property type="entry name" value="apt"/>
    <property type="match status" value="1"/>
</dbReference>
<dbReference type="NCBIfam" id="NF002633">
    <property type="entry name" value="PRK02304.1-2"/>
    <property type="match status" value="1"/>
</dbReference>
<dbReference type="NCBIfam" id="NF002634">
    <property type="entry name" value="PRK02304.1-3"/>
    <property type="match status" value="1"/>
</dbReference>
<dbReference type="NCBIfam" id="NF002636">
    <property type="entry name" value="PRK02304.1-5"/>
    <property type="match status" value="1"/>
</dbReference>
<dbReference type="PANTHER" id="PTHR32315">
    <property type="entry name" value="ADENINE PHOSPHORIBOSYLTRANSFERASE"/>
    <property type="match status" value="1"/>
</dbReference>
<dbReference type="PANTHER" id="PTHR32315:SF3">
    <property type="entry name" value="ADENINE PHOSPHORIBOSYLTRANSFERASE"/>
    <property type="match status" value="1"/>
</dbReference>
<dbReference type="Pfam" id="PF00156">
    <property type="entry name" value="Pribosyltran"/>
    <property type="match status" value="1"/>
</dbReference>
<dbReference type="SUPFAM" id="SSF53271">
    <property type="entry name" value="PRTase-like"/>
    <property type="match status" value="1"/>
</dbReference>
<dbReference type="PROSITE" id="PS00103">
    <property type="entry name" value="PUR_PYR_PR_TRANSFER"/>
    <property type="match status" value="1"/>
</dbReference>
<gene>
    <name evidence="1" type="primary">apt</name>
    <name type="ordered locus">Teth39_1027</name>
</gene>
<sequence length="173" mass="19207">MTLEEIKMMIREIPDFPKKGIKFKDITPVLKDAKAFNYSIEMLAKALEGRKFDLIAAPEARGFLFGAPLAYRLGVGFVPVRKPGKLPAETLSYEYELEYGTDSLEIHKDAVLEGQRVVIVDDLLATGGTIYASAKLVESLGGIVDSIIFLTELTFLDGRKKLDGYDIISLIKF</sequence>
<protein>
    <recommendedName>
        <fullName evidence="1">Adenine phosphoribosyltransferase</fullName>
        <shortName evidence="1">APRT</shortName>
        <ecNumber evidence="1">2.4.2.7</ecNumber>
    </recommendedName>
</protein>
<evidence type="ECO:0000255" key="1">
    <source>
        <dbReference type="HAMAP-Rule" id="MF_00004"/>
    </source>
</evidence>
<evidence type="ECO:0007829" key="2">
    <source>
        <dbReference type="PDB" id="4LZA"/>
    </source>
</evidence>
<organism>
    <name type="scientific">Thermoanaerobacter pseudethanolicus (strain ATCC 33223 / 39E)</name>
    <name type="common">Clostridium thermohydrosulfuricum</name>
    <dbReference type="NCBI Taxonomy" id="340099"/>
    <lineage>
        <taxon>Bacteria</taxon>
        <taxon>Bacillati</taxon>
        <taxon>Bacillota</taxon>
        <taxon>Clostridia</taxon>
        <taxon>Thermoanaerobacterales</taxon>
        <taxon>Thermoanaerobacteraceae</taxon>
        <taxon>Thermoanaerobacter</taxon>
    </lineage>
</organism>
<keyword id="KW-0002">3D-structure</keyword>
<keyword id="KW-0963">Cytoplasm</keyword>
<keyword id="KW-0328">Glycosyltransferase</keyword>
<keyword id="KW-0660">Purine salvage</keyword>
<keyword id="KW-1185">Reference proteome</keyword>
<keyword id="KW-0808">Transferase</keyword>
<name>APT_THEP3</name>
<reference key="1">
    <citation type="submission" date="2008-01" db="EMBL/GenBank/DDBJ databases">
        <title>Complete sequence of Thermoanaerobacter pseudethanolicus 39E.</title>
        <authorList>
            <person name="Copeland A."/>
            <person name="Lucas S."/>
            <person name="Lapidus A."/>
            <person name="Barry K."/>
            <person name="Glavina del Rio T."/>
            <person name="Dalin E."/>
            <person name="Tice H."/>
            <person name="Pitluck S."/>
            <person name="Bruce D."/>
            <person name="Goodwin L."/>
            <person name="Saunders E."/>
            <person name="Brettin T."/>
            <person name="Detter J.C."/>
            <person name="Han C."/>
            <person name="Schmutz J."/>
            <person name="Larimer F."/>
            <person name="Land M."/>
            <person name="Hauser L."/>
            <person name="Kyrpides N."/>
            <person name="Lykidis A."/>
            <person name="Hemme C."/>
            <person name="Fields M.W."/>
            <person name="He Z."/>
            <person name="Zhou J."/>
            <person name="Richardson P."/>
        </authorList>
    </citation>
    <scope>NUCLEOTIDE SEQUENCE [LARGE SCALE GENOMIC DNA]</scope>
    <source>
        <strain>ATCC 33223 / DSM 2355 / 39E</strain>
    </source>
</reference>
<comment type="function">
    <text evidence="1">Catalyzes a salvage reaction resulting in the formation of AMP, that is energically less costly than de novo synthesis.</text>
</comment>
<comment type="catalytic activity">
    <reaction evidence="1">
        <text>AMP + diphosphate = 5-phospho-alpha-D-ribose 1-diphosphate + adenine</text>
        <dbReference type="Rhea" id="RHEA:16609"/>
        <dbReference type="ChEBI" id="CHEBI:16708"/>
        <dbReference type="ChEBI" id="CHEBI:33019"/>
        <dbReference type="ChEBI" id="CHEBI:58017"/>
        <dbReference type="ChEBI" id="CHEBI:456215"/>
        <dbReference type="EC" id="2.4.2.7"/>
    </reaction>
</comment>
<comment type="pathway">
    <text evidence="1">Purine metabolism; AMP biosynthesis via salvage pathway; AMP from adenine: step 1/1.</text>
</comment>
<comment type="subunit">
    <text evidence="1">Homodimer.</text>
</comment>
<comment type="subcellular location">
    <subcellularLocation>
        <location evidence="1">Cytoplasm</location>
    </subcellularLocation>
</comment>
<comment type="similarity">
    <text evidence="1">Belongs to the purine/pyrimidine phosphoribosyltransferase family.</text>
</comment>
<feature type="chain" id="PRO_1000089013" description="Adenine phosphoribosyltransferase">
    <location>
        <begin position="1"/>
        <end position="173"/>
    </location>
</feature>
<feature type="helix" evidence="2">
    <location>
        <begin position="3"/>
        <end position="8"/>
    </location>
</feature>
<feature type="strand" evidence="2">
    <location>
        <begin position="10"/>
        <end position="14"/>
    </location>
</feature>
<feature type="strand" evidence="2">
    <location>
        <begin position="22"/>
        <end position="25"/>
    </location>
</feature>
<feature type="helix" evidence="2">
    <location>
        <begin position="27"/>
        <end position="31"/>
    </location>
</feature>
<feature type="helix" evidence="2">
    <location>
        <begin position="33"/>
        <end position="46"/>
    </location>
</feature>
<feature type="turn" evidence="2">
    <location>
        <begin position="47"/>
        <end position="49"/>
    </location>
</feature>
<feature type="strand" evidence="2">
    <location>
        <begin position="53"/>
        <end position="58"/>
    </location>
</feature>
<feature type="turn" evidence="2">
    <location>
        <begin position="59"/>
        <end position="62"/>
    </location>
</feature>
<feature type="helix" evidence="2">
    <location>
        <begin position="63"/>
        <end position="73"/>
    </location>
</feature>
<feature type="strand" evidence="2">
    <location>
        <begin position="76"/>
        <end position="81"/>
    </location>
</feature>
<feature type="strand" evidence="2">
    <location>
        <begin position="90"/>
        <end position="95"/>
    </location>
</feature>
<feature type="strand" evidence="2">
    <location>
        <begin position="102"/>
        <end position="107"/>
    </location>
</feature>
<feature type="strand" evidence="2">
    <location>
        <begin position="116"/>
        <end position="126"/>
    </location>
</feature>
<feature type="helix" evidence="2">
    <location>
        <begin position="128"/>
        <end position="139"/>
    </location>
</feature>
<feature type="strand" evidence="2">
    <location>
        <begin position="143"/>
        <end position="152"/>
    </location>
</feature>
<feature type="helix" evidence="2">
    <location>
        <begin position="154"/>
        <end position="156"/>
    </location>
</feature>
<feature type="helix" evidence="2">
    <location>
        <begin position="158"/>
        <end position="161"/>
    </location>
</feature>
<feature type="turn" evidence="2">
    <location>
        <begin position="162"/>
        <end position="164"/>
    </location>
</feature>
<feature type="strand" evidence="2">
    <location>
        <begin position="167"/>
        <end position="172"/>
    </location>
</feature>